<organism>
    <name type="scientific">Streptomyces coerulescens</name>
    <dbReference type="NCBI Taxonomy" id="29304"/>
    <lineage>
        <taxon>Bacteria</taxon>
        <taxon>Bacillati</taxon>
        <taxon>Actinomycetota</taxon>
        <taxon>Actinomycetes</taxon>
        <taxon>Kitasatosporales</taxon>
        <taxon>Streptomycetaceae</taxon>
        <taxon>Streptomyces</taxon>
    </lineage>
</organism>
<comment type="function">
    <text evidence="1 2 4">Competitive antagonist of atrial natriuretic peptide NPR-A receptors. It binds competitively to atrial natriuretic peptide (ANP) receptors from bovine adrenal cortex and inhibits the ANP-induced intracellular cGMP accumulation in bovine aorta smooth muscle cells. Can also reduce the increase in cGMP produced by ANP or BNP (brain natriuretic peptide) in pregnant guinea pig myometrium, but has no effect on relaxation induced by either peptide. Blocks the ANP-induced human sperm acrosome reaction without affecting the acrosomal exocytosis or sperm motility. Also exhibits major and deleterious nonspecific (and even cytotoxic) effects on human fat cells, as it displays noncompetitive antagonism and exerts an inhibitory action on basal and beta-adrenergic receptor-induced lipolytic response.</text>
</comment>
<comment type="subcellular location">
    <subcellularLocation>
        <location evidence="5">Secreted</location>
    </subcellularLocation>
</comment>
<comment type="mass spectrometry"/>
<comment type="miscellaneous">
    <text>Anantin has been tested for antimicrobial activity against a broad variety of bacteria and fungi, but no antibiotic activity has been found.</text>
</comment>
<comment type="miscellaneous">
    <text>Inhibits the binding of ANP by 50% (IC(50)) at 1.0 uM.</text>
</comment>
<comment type="caution">
    <text evidence="5">The isopeptide linked residue 8 is shown as Asn rather than Asp as mentioned in PubMed:1826288, because it is not known whether Asp or Asn is encoded and the isopeptide bonds are almost always formed between the amides Asn or Gln and N6-lysine or alpha amino groups, with the liberation of an ammonia that makes the reaction essentially irreversible.</text>
</comment>
<proteinExistence type="evidence at protein level"/>
<reference key="1">
    <citation type="journal article" date="1991" name="J. Antibiot.">
        <title>Anantin -- a peptide antagonist of the atrial natriuretic factor (ANF). II. Determination of the primary sequence by NMR on the basis of proton assignments.</title>
        <authorList>
            <person name="Wyss D.F."/>
            <person name="Lahm H.-W."/>
            <person name="Manneberg M."/>
            <person name="Labhardt A.M."/>
        </authorList>
    </citation>
    <scope>PROTEIN SEQUENCE</scope>
</reference>
<reference key="2">
    <citation type="journal article" date="1991" name="J. Antibiot.">
        <title>Anantin -- a peptide antagonist of the atrial natriuretic factor (ANF). I. Producing organism, fermentation, isolation and biological activity.</title>
        <authorList>
            <person name="Weber W."/>
            <person name="Fischli W."/>
            <person name="Hochuli E."/>
            <person name="Kupfer E."/>
            <person name="Weibel E.K."/>
        </authorList>
    </citation>
    <scope>CHARACTERIZATION</scope>
    <scope>MASS SPECTROMETRY</scope>
</reference>
<reference key="3">
    <citation type="journal article" date="1998" name="Am. J. Physiol.">
        <title>Atrial natriuretic peptide induces acrosomal exocytosis of human spermatozoa.</title>
        <authorList>
            <person name="Rotem R."/>
            <person name="Zamir N."/>
            <person name="Keynan N."/>
            <person name="Barkan D."/>
            <person name="Breitbart H."/>
            <person name="Naor Z."/>
        </authorList>
    </citation>
    <scope>FUNCTION</scope>
</reference>
<reference key="4">
    <citation type="journal article" date="2001" name="J. Pharmacol. Exp. Ther.">
        <title>Natriuretic peptide-induced relaxation of myometrium from the pregnant guinea pig is not mediated by guanylate cyclase activation.</title>
        <authorList>
            <person name="Carvajal J.A."/>
            <person name="Aguan K."/>
            <person name="Thompson L.P."/>
            <person name="Buhimschi I.A."/>
            <person name="Weiner C.P."/>
        </authorList>
    </citation>
    <scope>FUNCTION</scope>
</reference>
<reference key="5">
    <citation type="journal article" date="2004" name="J. Pharmacol. Exp. Ther.">
        <title>Functional and pharmacological characterization of the natriuretic peptide-dependent lipolytic pathway in human fat cells.</title>
        <authorList>
            <person name="Moro C."/>
            <person name="Galitzky J."/>
            <person name="Sengenes C."/>
            <person name="Crampes F."/>
            <person name="Lafontan M."/>
            <person name="Berlan M."/>
        </authorList>
    </citation>
    <scope>FUNCTION</scope>
</reference>
<accession>Q7M0J9</accession>
<protein>
    <recommendedName>
        <fullName>Anantin</fullName>
    </recommendedName>
    <alternativeName>
        <fullName>GC-A blocker</fullName>
    </alternativeName>
    <alternativeName>
        <fullName>NPR-A antagonist</fullName>
    </alternativeName>
</protein>
<sequence>GFIGWGNNIFGHYSGDF</sequence>
<name>ANAN_STRCD</name>
<dbReference type="PIR" id="A61211">
    <property type="entry name" value="A61211"/>
</dbReference>
<dbReference type="GO" id="GO:0005576">
    <property type="term" value="C:extracellular region"/>
    <property type="evidence" value="ECO:0007669"/>
    <property type="project" value="UniProtKB-SubCell"/>
</dbReference>
<evidence type="ECO:0000269" key="1">
    <source>
    </source>
</evidence>
<evidence type="ECO:0000269" key="2">
    <source>
    </source>
</evidence>
<evidence type="ECO:0000269" key="3">
    <source>
    </source>
</evidence>
<evidence type="ECO:0000269" key="4">
    <source>
    </source>
</evidence>
<evidence type="ECO:0000305" key="5"/>
<feature type="peptide" id="PRO_0000044106" description="Anantin">
    <location>
        <begin position="1"/>
        <end position="17"/>
    </location>
</feature>
<feature type="cross-link" description="Isoaspartyl glycine isopeptide (Gly-Asn)">
    <location>
        <begin position="1"/>
        <end position="8"/>
    </location>
</feature>
<keyword id="KW-0903">Direct protein sequencing</keyword>
<keyword id="KW-1017">Isopeptide bond</keyword>
<keyword id="KW-0964">Secreted</keyword>